<sequence>MEQTWRWYGPNDPVSLDDVRQAGATGVVTALHHIPNGEVWPIEEIKARQALLAEKGLVWSVVESIPVHEEIKTHSGNYQQHIAHYQQSLRNLAACGIDTVCYNFMPILDWTRTDLEYLLPDGSKALRFDQIAFAAFDLHILQRAGAEQDYTQEEQQQAAARFAAMSEADIAKLTGNIIAGLPGAEEGYTLDQFRARLAEYDAIDKAQLRENMAVFLRAIVPVAEEVGVRLAVHPDDPPRPLLGLPRIVSTIEDMQWFKQTVDSLHNGFTMCTGSYGVREDNDLVRMIETFGDRIHFTHLRATCREDNPKSFHEGAHLQGDVDMVAVIEAILSEEQRRHQTGDTRPIPMRPDHGHQMLDDLKKKTNPGYSAIGRLKGLAELRGVELALKRRFFPELP</sequence>
<protein>
    <recommendedName>
        <fullName evidence="1">Mannonate dehydratase</fullName>
        <ecNumber evidence="1">4.2.1.8</ecNumber>
    </recommendedName>
    <alternativeName>
        <fullName evidence="1">D-mannonate hydro-lyase</fullName>
    </alternativeName>
</protein>
<dbReference type="EC" id="4.2.1.8" evidence="1"/>
<dbReference type="EMBL" id="CP000826">
    <property type="protein sequence ID" value="ABV42336.1"/>
    <property type="molecule type" value="Genomic_DNA"/>
</dbReference>
<dbReference type="SMR" id="A8GGU6"/>
<dbReference type="STRING" id="399741.Spro_3238"/>
<dbReference type="KEGG" id="spe:Spro_3238"/>
<dbReference type="eggNOG" id="COG1312">
    <property type="taxonomic scope" value="Bacteria"/>
</dbReference>
<dbReference type="HOGENOM" id="CLU_058621_2_0_6"/>
<dbReference type="OrthoDB" id="9780250at2"/>
<dbReference type="UniPathway" id="UPA00246"/>
<dbReference type="GO" id="GO:0008198">
    <property type="term" value="F:ferrous iron binding"/>
    <property type="evidence" value="ECO:0007669"/>
    <property type="project" value="TreeGrafter"/>
</dbReference>
<dbReference type="GO" id="GO:0030145">
    <property type="term" value="F:manganese ion binding"/>
    <property type="evidence" value="ECO:0007669"/>
    <property type="project" value="TreeGrafter"/>
</dbReference>
<dbReference type="GO" id="GO:0008927">
    <property type="term" value="F:mannonate dehydratase activity"/>
    <property type="evidence" value="ECO:0007669"/>
    <property type="project" value="UniProtKB-UniRule"/>
</dbReference>
<dbReference type="GO" id="GO:0042840">
    <property type="term" value="P:D-glucuronate catabolic process"/>
    <property type="evidence" value="ECO:0007669"/>
    <property type="project" value="TreeGrafter"/>
</dbReference>
<dbReference type="FunFam" id="3.20.20.150:FF:000010">
    <property type="entry name" value="Mannonate dehydratase"/>
    <property type="match status" value="1"/>
</dbReference>
<dbReference type="Gene3D" id="3.20.20.150">
    <property type="entry name" value="Divalent-metal-dependent TIM barrel enzymes"/>
    <property type="match status" value="1"/>
</dbReference>
<dbReference type="HAMAP" id="MF_00106">
    <property type="entry name" value="UxuA"/>
    <property type="match status" value="1"/>
</dbReference>
<dbReference type="InterPro" id="IPR004628">
    <property type="entry name" value="Man_deHydtase"/>
</dbReference>
<dbReference type="InterPro" id="IPR036237">
    <property type="entry name" value="Xyl_isomerase-like_sf"/>
</dbReference>
<dbReference type="NCBIfam" id="NF003027">
    <property type="entry name" value="PRK03906.1"/>
    <property type="match status" value="1"/>
</dbReference>
<dbReference type="NCBIfam" id="TIGR00695">
    <property type="entry name" value="uxuA"/>
    <property type="match status" value="1"/>
</dbReference>
<dbReference type="PANTHER" id="PTHR30387">
    <property type="entry name" value="MANNONATE DEHYDRATASE"/>
    <property type="match status" value="1"/>
</dbReference>
<dbReference type="PANTHER" id="PTHR30387:SF2">
    <property type="entry name" value="MANNONATE DEHYDRATASE"/>
    <property type="match status" value="1"/>
</dbReference>
<dbReference type="Pfam" id="PF03786">
    <property type="entry name" value="UxuA"/>
    <property type="match status" value="1"/>
</dbReference>
<dbReference type="PIRSF" id="PIRSF016049">
    <property type="entry name" value="Man_dehyd"/>
    <property type="match status" value="1"/>
</dbReference>
<dbReference type="SUPFAM" id="SSF51658">
    <property type="entry name" value="Xylose isomerase-like"/>
    <property type="match status" value="1"/>
</dbReference>
<organism>
    <name type="scientific">Serratia proteamaculans (strain 568)</name>
    <dbReference type="NCBI Taxonomy" id="399741"/>
    <lineage>
        <taxon>Bacteria</taxon>
        <taxon>Pseudomonadati</taxon>
        <taxon>Pseudomonadota</taxon>
        <taxon>Gammaproteobacteria</taxon>
        <taxon>Enterobacterales</taxon>
        <taxon>Yersiniaceae</taxon>
        <taxon>Serratia</taxon>
    </lineage>
</organism>
<evidence type="ECO:0000255" key="1">
    <source>
        <dbReference type="HAMAP-Rule" id="MF_00106"/>
    </source>
</evidence>
<feature type="chain" id="PRO_1000057703" description="Mannonate dehydratase">
    <location>
        <begin position="1"/>
        <end position="396"/>
    </location>
</feature>
<gene>
    <name evidence="1" type="primary">uxuA</name>
    <name type="ordered locus">Spro_3238</name>
</gene>
<accession>A8GGU6</accession>
<name>UXUA_SERP5</name>
<comment type="function">
    <text evidence="1">Catalyzes the dehydration of D-mannonate.</text>
</comment>
<comment type="catalytic activity">
    <reaction evidence="1">
        <text>D-mannonate = 2-dehydro-3-deoxy-D-gluconate + H2O</text>
        <dbReference type="Rhea" id="RHEA:20097"/>
        <dbReference type="ChEBI" id="CHEBI:15377"/>
        <dbReference type="ChEBI" id="CHEBI:17767"/>
        <dbReference type="ChEBI" id="CHEBI:57990"/>
        <dbReference type="EC" id="4.2.1.8"/>
    </reaction>
</comment>
<comment type="cofactor">
    <cofactor evidence="1">
        <name>Fe(2+)</name>
        <dbReference type="ChEBI" id="CHEBI:29033"/>
    </cofactor>
    <cofactor evidence="1">
        <name>Mn(2+)</name>
        <dbReference type="ChEBI" id="CHEBI:29035"/>
    </cofactor>
</comment>
<comment type="pathway">
    <text evidence="1">Carbohydrate metabolism; pentose and glucuronate interconversion.</text>
</comment>
<comment type="similarity">
    <text evidence="1">Belongs to the mannonate dehydratase family.</text>
</comment>
<keyword id="KW-0408">Iron</keyword>
<keyword id="KW-0456">Lyase</keyword>
<keyword id="KW-0464">Manganese</keyword>
<proteinExistence type="inferred from homology"/>
<reference key="1">
    <citation type="submission" date="2007-09" db="EMBL/GenBank/DDBJ databases">
        <title>Complete sequence of chromosome of Serratia proteamaculans 568.</title>
        <authorList>
            <consortium name="US DOE Joint Genome Institute"/>
            <person name="Copeland A."/>
            <person name="Lucas S."/>
            <person name="Lapidus A."/>
            <person name="Barry K."/>
            <person name="Glavina del Rio T."/>
            <person name="Dalin E."/>
            <person name="Tice H."/>
            <person name="Pitluck S."/>
            <person name="Chain P."/>
            <person name="Malfatti S."/>
            <person name="Shin M."/>
            <person name="Vergez L."/>
            <person name="Schmutz J."/>
            <person name="Larimer F."/>
            <person name="Land M."/>
            <person name="Hauser L."/>
            <person name="Kyrpides N."/>
            <person name="Kim E."/>
            <person name="Taghavi S."/>
            <person name="Newman L."/>
            <person name="Vangronsveld J."/>
            <person name="van der Lelie D."/>
            <person name="Richardson P."/>
        </authorList>
    </citation>
    <scope>NUCLEOTIDE SEQUENCE [LARGE SCALE GENOMIC DNA]</scope>
    <source>
        <strain>568</strain>
    </source>
</reference>